<feature type="chain" id="PRO_1000197313" description="Spermidine export protein MdtI">
    <location>
        <begin position="1"/>
        <end position="109"/>
    </location>
</feature>
<feature type="transmembrane region" description="Helical" evidence="1">
    <location>
        <begin position="6"/>
        <end position="26"/>
    </location>
</feature>
<feature type="transmembrane region" description="Helical" evidence="1">
    <location>
        <begin position="36"/>
        <end position="56"/>
    </location>
</feature>
<feature type="transmembrane region" description="Helical" evidence="1">
    <location>
        <begin position="64"/>
        <end position="84"/>
    </location>
</feature>
<feature type="transmembrane region" description="Helical" evidence="1">
    <location>
        <begin position="88"/>
        <end position="108"/>
    </location>
</feature>
<gene>
    <name evidence="1" type="primary">mdtI</name>
    <name type="ordered locus">ECH74115_2309</name>
</gene>
<reference key="1">
    <citation type="journal article" date="2011" name="Proc. Natl. Acad. Sci. U.S.A.">
        <title>Genomic anatomy of Escherichia coli O157:H7 outbreaks.</title>
        <authorList>
            <person name="Eppinger M."/>
            <person name="Mammel M.K."/>
            <person name="Leclerc J.E."/>
            <person name="Ravel J."/>
            <person name="Cebula T.A."/>
        </authorList>
    </citation>
    <scope>NUCLEOTIDE SEQUENCE [LARGE SCALE GENOMIC DNA]</scope>
    <source>
        <strain>EC4115 / EHEC</strain>
    </source>
</reference>
<protein>
    <recommendedName>
        <fullName evidence="1">Spermidine export protein MdtI</fullName>
    </recommendedName>
</protein>
<dbReference type="EMBL" id="CP001164">
    <property type="protein sequence ID" value="ACI39298.1"/>
    <property type="molecule type" value="Genomic_DNA"/>
</dbReference>
<dbReference type="RefSeq" id="WP_000046661.1">
    <property type="nucleotide sequence ID" value="NC_011353.1"/>
</dbReference>
<dbReference type="SMR" id="B5Z435"/>
<dbReference type="GeneID" id="93775747"/>
<dbReference type="KEGG" id="ecf:ECH74115_2309"/>
<dbReference type="HOGENOM" id="CLU_133067_0_4_6"/>
<dbReference type="GO" id="GO:0005886">
    <property type="term" value="C:plasma membrane"/>
    <property type="evidence" value="ECO:0007669"/>
    <property type="project" value="UniProtKB-SubCell"/>
</dbReference>
<dbReference type="GO" id="GO:0015199">
    <property type="term" value="F:amino-acid betaine transmembrane transporter activity"/>
    <property type="evidence" value="ECO:0007669"/>
    <property type="project" value="TreeGrafter"/>
</dbReference>
<dbReference type="GO" id="GO:0015297">
    <property type="term" value="F:antiporter activity"/>
    <property type="evidence" value="ECO:0007669"/>
    <property type="project" value="TreeGrafter"/>
</dbReference>
<dbReference type="GO" id="GO:0015220">
    <property type="term" value="F:choline transmembrane transporter activity"/>
    <property type="evidence" value="ECO:0007669"/>
    <property type="project" value="TreeGrafter"/>
</dbReference>
<dbReference type="GO" id="GO:0015606">
    <property type="term" value="F:spermidine transmembrane transporter activity"/>
    <property type="evidence" value="ECO:0007669"/>
    <property type="project" value="UniProtKB-UniRule"/>
</dbReference>
<dbReference type="GO" id="GO:0031460">
    <property type="term" value="P:glycine betaine transport"/>
    <property type="evidence" value="ECO:0007669"/>
    <property type="project" value="TreeGrafter"/>
</dbReference>
<dbReference type="FunFam" id="1.10.3730.20:FF:000001">
    <property type="entry name" value="Quaternary ammonium compound resistance transporter SugE"/>
    <property type="match status" value="1"/>
</dbReference>
<dbReference type="Gene3D" id="1.10.3730.20">
    <property type="match status" value="1"/>
</dbReference>
<dbReference type="HAMAP" id="MF_01597">
    <property type="entry name" value="MdtI"/>
    <property type="match status" value="1"/>
</dbReference>
<dbReference type="InterPro" id="IPR000390">
    <property type="entry name" value="Small_drug/metabolite_transptr"/>
</dbReference>
<dbReference type="InterPro" id="IPR045324">
    <property type="entry name" value="Small_multidrug_res"/>
</dbReference>
<dbReference type="InterPro" id="IPR023737">
    <property type="entry name" value="Spermidine_export_MdtI"/>
</dbReference>
<dbReference type="NCBIfam" id="NF007934">
    <property type="entry name" value="PRK10650.1"/>
    <property type="match status" value="1"/>
</dbReference>
<dbReference type="PANTHER" id="PTHR30561">
    <property type="entry name" value="SMR FAMILY PROTON-DEPENDENT DRUG EFFLUX TRANSPORTER SUGE"/>
    <property type="match status" value="1"/>
</dbReference>
<dbReference type="PANTHER" id="PTHR30561:SF6">
    <property type="entry name" value="SPERMIDINE EXPORT PROTEIN MDTI"/>
    <property type="match status" value="1"/>
</dbReference>
<dbReference type="Pfam" id="PF00893">
    <property type="entry name" value="Multi_Drug_Res"/>
    <property type="match status" value="1"/>
</dbReference>
<dbReference type="SUPFAM" id="SSF103481">
    <property type="entry name" value="Multidrug resistance efflux transporter EmrE"/>
    <property type="match status" value="1"/>
</dbReference>
<name>MDTI_ECO5E</name>
<proteinExistence type="inferred from homology"/>
<organism>
    <name type="scientific">Escherichia coli O157:H7 (strain EC4115 / EHEC)</name>
    <dbReference type="NCBI Taxonomy" id="444450"/>
    <lineage>
        <taxon>Bacteria</taxon>
        <taxon>Pseudomonadati</taxon>
        <taxon>Pseudomonadota</taxon>
        <taxon>Gammaproteobacteria</taxon>
        <taxon>Enterobacterales</taxon>
        <taxon>Enterobacteriaceae</taxon>
        <taxon>Escherichia</taxon>
    </lineage>
</organism>
<evidence type="ECO:0000255" key="1">
    <source>
        <dbReference type="HAMAP-Rule" id="MF_01597"/>
    </source>
</evidence>
<sequence length="109" mass="11720">MAQFEWVHAAWLALAIVLEIVANVFLKFSDGFRRKIFGLLSLAAVLAAFSALSQAVKGIDLSVAYALWGGFGIAATLAAGWILFGQRLNRKGWIGLVLLLAGMIMVKLA</sequence>
<accession>B5Z435</accession>
<keyword id="KW-0997">Cell inner membrane</keyword>
<keyword id="KW-1003">Cell membrane</keyword>
<keyword id="KW-0472">Membrane</keyword>
<keyword id="KW-0812">Transmembrane</keyword>
<keyword id="KW-1133">Transmembrane helix</keyword>
<keyword id="KW-0813">Transport</keyword>
<comment type="function">
    <text evidence="1">Catalyzes the excretion of spermidine.</text>
</comment>
<comment type="subunit">
    <text evidence="1">Forms a complex with MdtJ.</text>
</comment>
<comment type="subcellular location">
    <subcellularLocation>
        <location evidence="1">Cell inner membrane</location>
        <topology evidence="1">Multi-pass membrane protein</topology>
    </subcellularLocation>
</comment>
<comment type="similarity">
    <text evidence="1">Belongs to the drug/metabolite transporter (DMT) superfamily. Small multidrug resistance (SMR) (TC 2.A.7.1) family. MdtI subfamily.</text>
</comment>